<dbReference type="EMBL" id="JX025013">
    <property type="protein sequence ID" value="AFX61609.1"/>
    <property type="molecule type" value="mRNA"/>
</dbReference>
<dbReference type="EMBL" id="JX025014">
    <property type="protein sequence ID" value="AFX61610.1"/>
    <property type="molecule type" value="mRNA"/>
</dbReference>
<dbReference type="SMR" id="B3EWY1"/>
<dbReference type="GO" id="GO:0005576">
    <property type="term" value="C:extracellular region"/>
    <property type="evidence" value="ECO:0007669"/>
    <property type="project" value="UniProtKB-SubCell"/>
</dbReference>
<dbReference type="GO" id="GO:0008200">
    <property type="term" value="F:ion channel inhibitor activity"/>
    <property type="evidence" value="ECO:0007669"/>
    <property type="project" value="InterPro"/>
</dbReference>
<dbReference type="GO" id="GO:0015459">
    <property type="term" value="F:potassium channel regulator activity"/>
    <property type="evidence" value="ECO:0007669"/>
    <property type="project" value="UniProtKB-KW"/>
</dbReference>
<dbReference type="GO" id="GO:0090729">
    <property type="term" value="F:toxin activity"/>
    <property type="evidence" value="ECO:0007669"/>
    <property type="project" value="UniProtKB-KW"/>
</dbReference>
<dbReference type="Gene3D" id="3.30.30.10">
    <property type="entry name" value="Knottin, scorpion toxin-like"/>
    <property type="match status" value="1"/>
</dbReference>
<dbReference type="InterPro" id="IPR036574">
    <property type="entry name" value="Scorpion_toxin-like_sf"/>
</dbReference>
<dbReference type="InterPro" id="IPR001947">
    <property type="entry name" value="Scorpion_toxinS_K_inh"/>
</dbReference>
<dbReference type="Pfam" id="PF00451">
    <property type="entry name" value="Toxin_2"/>
    <property type="match status" value="1"/>
</dbReference>
<dbReference type="PRINTS" id="PR00286">
    <property type="entry name" value="CHARYBDTOXIN"/>
</dbReference>
<dbReference type="SUPFAM" id="SSF57095">
    <property type="entry name" value="Scorpion toxin-like"/>
    <property type="match status" value="1"/>
</dbReference>
<dbReference type="PROSITE" id="PS01138">
    <property type="entry name" value="SCORP_SHORT_TOXIN"/>
    <property type="match status" value="1"/>
</dbReference>
<reference evidence="5" key="1">
    <citation type="journal article" date="2013" name="Toxicon">
        <title>Novel potassium channel blocker venom peptides from Mesobuthus gibbosus (Scorpiones: Buthidae).</title>
        <authorList>
            <person name="Diego-Garcia E."/>
            <person name="Peigneur S."/>
            <person name="Debaveye S."/>
            <person name="Gheldof E."/>
            <person name="Tytgat J."/>
            <person name="Caliskan F."/>
        </authorList>
    </citation>
    <scope>NUCLEOTIDE SEQUENCE [MRNA]</scope>
    <scope>PROTEIN SEQUENCE OF 23-59</scope>
    <scope>FUNCTION</scope>
    <scope>MASS SPECTROMETRY</scope>
    <source>
        <tissue evidence="3">Venom</tissue>
        <tissue>Venom gland</tissue>
    </source>
</reference>
<keyword id="KW-0903">Direct protein sequencing</keyword>
<keyword id="KW-1015">Disulfide bond</keyword>
<keyword id="KW-0872">Ion channel impairing toxin</keyword>
<keyword id="KW-0632">Potassium channel impairing toxin</keyword>
<keyword id="KW-0964">Secreted</keyword>
<keyword id="KW-0732">Signal</keyword>
<keyword id="KW-0800">Toxin</keyword>
<keyword id="KW-1220">Voltage-gated potassium channel impairing toxin</keyword>
<evidence type="ECO:0000250" key="1"/>
<evidence type="ECO:0000255" key="2"/>
<evidence type="ECO:0000269" key="3">
    <source>
    </source>
</evidence>
<evidence type="ECO:0000303" key="4">
    <source>
    </source>
</evidence>
<evidence type="ECO:0000305" key="5"/>
<evidence type="ECO:0000305" key="6">
    <source>
    </source>
</evidence>
<organism>
    <name type="scientific">Mesobuthus gibbosus</name>
    <name type="common">Mediterranean checkered scorpion</name>
    <name type="synonym">Buthus gibbosus</name>
    <dbReference type="NCBI Taxonomy" id="123226"/>
    <lineage>
        <taxon>Eukaryota</taxon>
        <taxon>Metazoa</taxon>
        <taxon>Ecdysozoa</taxon>
        <taxon>Arthropoda</taxon>
        <taxon>Chelicerata</taxon>
        <taxon>Arachnida</taxon>
        <taxon>Scorpiones</taxon>
        <taxon>Buthida</taxon>
        <taxon>Buthoidea</taxon>
        <taxon>Buthidae</taxon>
        <taxon>Mesobuthus</taxon>
    </lineage>
</organism>
<accession>B3EWY1</accession>
<accession>K7WHX1</accession>
<accession>K7WPN2</accession>
<name>KA167_MESGB</name>
<sequence>MKILSILLIALVICSISICTEAFGLIDVKCSASRECWVACKKVTGSGQGKCQNNQCRCY</sequence>
<proteinExistence type="evidence at protein level"/>
<protein>
    <recommendedName>
        <fullName>Potassium channel toxin alpha-KTx 16.7</fullName>
    </recommendedName>
    <alternativeName>
        <fullName>Alpha-KTx 16.5</fullName>
    </alternativeName>
    <alternativeName>
        <fullName evidence="4">MegKTx3</fullName>
    </alternativeName>
</protein>
<feature type="signal peptide" evidence="3">
    <location>
        <begin position="1"/>
        <end position="22"/>
    </location>
</feature>
<feature type="peptide" id="PRO_0000421235" description="Potassium channel toxin alpha-KTx 16.7">
    <location>
        <begin position="23"/>
        <end position="59"/>
    </location>
</feature>
<feature type="site" description="Basic residue of the functional dyad" evidence="1">
    <location>
        <position position="50"/>
    </location>
</feature>
<feature type="site" description="Aromatic residue of the functional dyad" evidence="1">
    <location>
        <position position="59"/>
    </location>
</feature>
<feature type="disulfide bond" evidence="1">
    <location>
        <begin position="30"/>
        <end position="51"/>
    </location>
</feature>
<feature type="disulfide bond" evidence="1">
    <location>
        <begin position="36"/>
        <end position="56"/>
    </location>
</feature>
<feature type="disulfide bond" evidence="1">
    <location>
        <begin position="40"/>
        <end position="58"/>
    </location>
</feature>
<feature type="sequence conflict" description="In Ref. 1; AFX61610." evidence="5" ref="1">
    <original>E</original>
    <variation>K</variation>
    <location>
        <position position="21"/>
    </location>
</feature>
<comment type="function">
    <text evidence="3">May play a role in blocking voltage-gated potassium channels Kv1.2/KCNA2, and Kv1.3/KCNA3. Blocks the voltage-gated potassium channel Kv1.3/KCNA3, with an IC(50) of 118.3 +-55.8 nM.</text>
</comment>
<comment type="subcellular location">
    <subcellularLocation>
        <location evidence="3">Secreted</location>
    </subcellularLocation>
</comment>
<comment type="tissue specificity">
    <text evidence="6">Expressed by the venom gland.</text>
</comment>
<comment type="domain">
    <text evidence="5">Has the structural arrangement of an alpha-helix connected to antiparallel beta-sheets by disulfide bonds (CS-alpha/beta).</text>
</comment>
<comment type="mass spectrometry"/>
<comment type="miscellaneous">
    <text evidence="6">Negative results: has no effect on rat Kv1.2/KCNA2 channel.</text>
</comment>
<comment type="similarity">
    <text evidence="2">Belongs to the short scorpion toxin superfamily. Potassium channel inhibitor family. Alpha-KTx 16 subfamily.</text>
</comment>